<sequence length="180" mass="20824">MIVYLHGFDSNSPGNHEKVLQLQFIDPDVRFISYSTLHPRHDMQYLLKEVDKAIQQGGDEKSLICGVGLGGFWAERIGFLCGIRQVAFNPNLYPQENMSGKIDRPEEYIDIASKCIDGFREKNRDRCLVVLSRHDEMLDSQRTAGDLHPYYEIVWDDKQNHKFKDLSPHLQRIKAFKTLG</sequence>
<evidence type="ECO:0000255" key="1">
    <source>
        <dbReference type="HAMAP-Rule" id="MF_01047"/>
    </source>
</evidence>
<gene>
    <name type="ordered locus">YPN_2013</name>
    <name type="ORF">YP516_2242</name>
</gene>
<organism>
    <name type="scientific">Yersinia pestis bv. Antiqua (strain Nepal516)</name>
    <dbReference type="NCBI Taxonomy" id="377628"/>
    <lineage>
        <taxon>Bacteria</taxon>
        <taxon>Pseudomonadati</taxon>
        <taxon>Pseudomonadota</taxon>
        <taxon>Gammaproteobacteria</taxon>
        <taxon>Enterobacterales</taxon>
        <taxon>Yersiniaceae</taxon>
        <taxon>Yersinia</taxon>
    </lineage>
</organism>
<dbReference type="EMBL" id="CP000305">
    <property type="protein sequence ID" value="ABG18342.1"/>
    <property type="molecule type" value="Genomic_DNA"/>
</dbReference>
<dbReference type="EMBL" id="ACNQ01000011">
    <property type="protein sequence ID" value="EEO76642.1"/>
    <property type="molecule type" value="Genomic_DNA"/>
</dbReference>
<dbReference type="SMR" id="Q1CI38"/>
<dbReference type="ESTHER" id="yerpe-y1616">
    <property type="family name" value="abh_upf00227"/>
</dbReference>
<dbReference type="KEGG" id="ypn:YPN_2013"/>
<dbReference type="HOGENOM" id="CLU_128769_0_0_6"/>
<dbReference type="Proteomes" id="UP000008936">
    <property type="component" value="Chromosome"/>
</dbReference>
<dbReference type="Gene3D" id="3.40.50.1820">
    <property type="entry name" value="alpha/beta hydrolase"/>
    <property type="match status" value="1"/>
</dbReference>
<dbReference type="HAMAP" id="MF_01047">
    <property type="entry name" value="UPF0227"/>
    <property type="match status" value="1"/>
</dbReference>
<dbReference type="InterPro" id="IPR029058">
    <property type="entry name" value="AB_hydrolase_fold"/>
</dbReference>
<dbReference type="InterPro" id="IPR022987">
    <property type="entry name" value="UPF0227"/>
</dbReference>
<dbReference type="InterPro" id="IPR008886">
    <property type="entry name" value="UPF0227/Esterase_YqiA"/>
</dbReference>
<dbReference type="NCBIfam" id="NF003431">
    <property type="entry name" value="PRK04940.1"/>
    <property type="match status" value="1"/>
</dbReference>
<dbReference type="PANTHER" id="PTHR35602">
    <property type="entry name" value="ESTERASE YQIA-RELATED"/>
    <property type="match status" value="1"/>
</dbReference>
<dbReference type="PANTHER" id="PTHR35602:SF2">
    <property type="entry name" value="UPF0227 PROTEIN YCFP"/>
    <property type="match status" value="1"/>
</dbReference>
<dbReference type="Pfam" id="PF05728">
    <property type="entry name" value="UPF0227"/>
    <property type="match status" value="1"/>
</dbReference>
<dbReference type="SUPFAM" id="SSF53474">
    <property type="entry name" value="alpha/beta-Hydrolases"/>
    <property type="match status" value="1"/>
</dbReference>
<proteinExistence type="inferred from homology"/>
<comment type="similarity">
    <text evidence="1">Belongs to the UPF0227 family.</text>
</comment>
<accession>Q1CI38</accession>
<accession>C4GTX8</accession>
<name>Y2013_YERPN</name>
<protein>
    <recommendedName>
        <fullName evidence="1">UPF0227 protein YPN_2013</fullName>
    </recommendedName>
</protein>
<feature type="chain" id="PRO_1000064307" description="UPF0227 protein YPN_2013">
    <location>
        <begin position="1"/>
        <end position="180"/>
    </location>
</feature>
<reference key="1">
    <citation type="journal article" date="2006" name="J. Bacteriol.">
        <title>Complete genome sequence of Yersinia pestis strains Antiqua and Nepal516: evidence of gene reduction in an emerging pathogen.</title>
        <authorList>
            <person name="Chain P.S.G."/>
            <person name="Hu P."/>
            <person name="Malfatti S.A."/>
            <person name="Radnedge L."/>
            <person name="Larimer F."/>
            <person name="Vergez L.M."/>
            <person name="Worsham P."/>
            <person name="Chu M.C."/>
            <person name="Andersen G.L."/>
        </authorList>
    </citation>
    <scope>NUCLEOTIDE SEQUENCE [LARGE SCALE GENOMIC DNA]</scope>
    <source>
        <strain>Nepal516</strain>
    </source>
</reference>
<reference key="2">
    <citation type="submission" date="2009-04" db="EMBL/GenBank/DDBJ databases">
        <title>Yersinia pestis Nepal516A whole genome shotgun sequencing project.</title>
        <authorList>
            <person name="Plunkett G. III"/>
            <person name="Anderson B.D."/>
            <person name="Baumler D.J."/>
            <person name="Burland V."/>
            <person name="Cabot E.L."/>
            <person name="Glasner J.D."/>
            <person name="Mau B."/>
            <person name="Neeno-Eckwall E."/>
            <person name="Perna N.T."/>
            <person name="Munk A.C."/>
            <person name="Tapia R."/>
            <person name="Green L.D."/>
            <person name="Rogers Y.C."/>
            <person name="Detter J.C."/>
            <person name="Bruce D.C."/>
            <person name="Brettin T.S."/>
        </authorList>
    </citation>
    <scope>NUCLEOTIDE SEQUENCE [LARGE SCALE GENOMIC DNA]</scope>
    <source>
        <strain>Nepal516</strain>
    </source>
</reference>